<sequence length="85" mass="9118">MSKVSFKITLTSDPRLPYKVLSVPESTPFTAVLKFAAEEFKVPAATSAIITNDGIGINPAQTAGNVFLKHGSELRIIPRDRVGSC</sequence>
<proteinExistence type="evidence at protein level"/>
<reference key="1">
    <citation type="journal article" date="2004" name="EMBO J.">
        <title>A novel protein-conjugating system for Ufm1, a ubiquitin-fold modifier.</title>
        <authorList>
            <person name="Komatsu M."/>
            <person name="Chiba T."/>
            <person name="Tatsumi K."/>
            <person name="Iemura S."/>
            <person name="Tanida I."/>
            <person name="Okazaki N."/>
            <person name="Ueno T."/>
            <person name="Kominami E."/>
            <person name="Natsume T."/>
            <person name="Tanaka K."/>
        </authorList>
    </citation>
    <scope>NUCLEOTIDE SEQUENCE [MRNA] (ISOFORM 1)</scope>
    <scope>FUNCTION</scope>
    <scope>SUBCELLULAR LOCATION</scope>
    <scope>MUTAGENESIS OF GLY-83</scope>
</reference>
<reference key="2">
    <citation type="journal article" date="2000" name="Genome Res.">
        <title>Cloning and functional analysis of cDNAs with open reading frames for 300 previously undefined genes expressed in CD34+ hematopoietic stem/progenitor cells.</title>
        <authorList>
            <person name="Zhang Q.-H."/>
            <person name="Ye M."/>
            <person name="Wu X.-Y."/>
            <person name="Ren S.-X."/>
            <person name="Zhao M."/>
            <person name="Zhao C.-J."/>
            <person name="Fu G."/>
            <person name="Shen Y."/>
            <person name="Fan H.-Y."/>
            <person name="Lu G."/>
            <person name="Zhong M."/>
            <person name="Xu X.-R."/>
            <person name="Han Z.-G."/>
            <person name="Zhang J.-W."/>
            <person name="Tao J."/>
            <person name="Huang Q.-H."/>
            <person name="Zhou J."/>
            <person name="Hu G.-X."/>
            <person name="Gu J."/>
            <person name="Chen S.-J."/>
            <person name="Chen Z."/>
        </authorList>
    </citation>
    <scope>NUCLEOTIDE SEQUENCE [LARGE SCALE MRNA] (ISOFORM 1)</scope>
    <source>
        <tissue>Bone marrow</tissue>
    </source>
</reference>
<reference key="3">
    <citation type="submission" date="2004-06" db="EMBL/GenBank/DDBJ databases">
        <title>Cloning of human full open reading frames in Gateway(TM) system entry vector (pDONR201).</title>
        <authorList>
            <person name="Ebert L."/>
            <person name="Schick M."/>
            <person name="Neubert P."/>
            <person name="Schatten R."/>
            <person name="Henze S."/>
            <person name="Korn B."/>
        </authorList>
    </citation>
    <scope>NUCLEOTIDE SEQUENCE [LARGE SCALE MRNA] (ISOFORM 1)</scope>
</reference>
<reference key="4">
    <citation type="journal article" date="2006" name="Genome Res.">
        <title>Diversification of transcriptional modulation: large-scale identification and characterization of putative alternative promoters of human genes.</title>
        <authorList>
            <person name="Kimura K."/>
            <person name="Wakamatsu A."/>
            <person name="Suzuki Y."/>
            <person name="Ota T."/>
            <person name="Nishikawa T."/>
            <person name="Yamashita R."/>
            <person name="Yamamoto J."/>
            <person name="Sekine M."/>
            <person name="Tsuritani K."/>
            <person name="Wakaguri H."/>
            <person name="Ishii S."/>
            <person name="Sugiyama T."/>
            <person name="Saito K."/>
            <person name="Isono Y."/>
            <person name="Irie R."/>
            <person name="Kushida N."/>
            <person name="Yoneyama T."/>
            <person name="Otsuka R."/>
            <person name="Kanda K."/>
            <person name="Yokoi T."/>
            <person name="Kondo H."/>
            <person name="Wagatsuma M."/>
            <person name="Murakawa K."/>
            <person name="Ishida S."/>
            <person name="Ishibashi T."/>
            <person name="Takahashi-Fujii A."/>
            <person name="Tanase T."/>
            <person name="Nagai K."/>
            <person name="Kikuchi H."/>
            <person name="Nakai K."/>
            <person name="Isogai T."/>
            <person name="Sugano S."/>
        </authorList>
    </citation>
    <scope>NUCLEOTIDE SEQUENCE [LARGE SCALE MRNA] (ISOFORM 2)</scope>
    <source>
        <tissue>Neuroblastoma</tissue>
    </source>
</reference>
<reference key="5">
    <citation type="journal article" date="2004" name="Nature">
        <title>The DNA sequence and analysis of human chromosome 13.</title>
        <authorList>
            <person name="Dunham A."/>
            <person name="Matthews L.H."/>
            <person name="Burton J."/>
            <person name="Ashurst J.L."/>
            <person name="Howe K.L."/>
            <person name="Ashcroft K.J."/>
            <person name="Beare D.M."/>
            <person name="Burford D.C."/>
            <person name="Hunt S.E."/>
            <person name="Griffiths-Jones S."/>
            <person name="Jones M.C."/>
            <person name="Keenan S.J."/>
            <person name="Oliver K."/>
            <person name="Scott C.E."/>
            <person name="Ainscough R."/>
            <person name="Almeida J.P."/>
            <person name="Ambrose K.D."/>
            <person name="Andrews D.T."/>
            <person name="Ashwell R.I.S."/>
            <person name="Babbage A.K."/>
            <person name="Bagguley C.L."/>
            <person name="Bailey J."/>
            <person name="Bannerjee R."/>
            <person name="Barlow K.F."/>
            <person name="Bates K."/>
            <person name="Beasley H."/>
            <person name="Bird C.P."/>
            <person name="Bray-Allen S."/>
            <person name="Brown A.J."/>
            <person name="Brown J.Y."/>
            <person name="Burrill W."/>
            <person name="Carder C."/>
            <person name="Carter N.P."/>
            <person name="Chapman J.C."/>
            <person name="Clamp M.E."/>
            <person name="Clark S.Y."/>
            <person name="Clarke G."/>
            <person name="Clee C.M."/>
            <person name="Clegg S.C."/>
            <person name="Cobley V."/>
            <person name="Collins J.E."/>
            <person name="Corby N."/>
            <person name="Coville G.J."/>
            <person name="Deloukas P."/>
            <person name="Dhami P."/>
            <person name="Dunham I."/>
            <person name="Dunn M."/>
            <person name="Earthrowl M.E."/>
            <person name="Ellington A.G."/>
            <person name="Faulkner L."/>
            <person name="Frankish A.G."/>
            <person name="Frankland J."/>
            <person name="French L."/>
            <person name="Garner P."/>
            <person name="Garnett J."/>
            <person name="Gilbert J.G.R."/>
            <person name="Gilson C.J."/>
            <person name="Ghori J."/>
            <person name="Grafham D.V."/>
            <person name="Gribble S.M."/>
            <person name="Griffiths C."/>
            <person name="Hall R.E."/>
            <person name="Hammond S."/>
            <person name="Harley J.L."/>
            <person name="Hart E.A."/>
            <person name="Heath P.D."/>
            <person name="Howden P.J."/>
            <person name="Huckle E.J."/>
            <person name="Hunt P.J."/>
            <person name="Hunt A.R."/>
            <person name="Johnson C."/>
            <person name="Johnson D."/>
            <person name="Kay M."/>
            <person name="Kimberley A.M."/>
            <person name="King A."/>
            <person name="Laird G.K."/>
            <person name="Langford C.J."/>
            <person name="Lawlor S."/>
            <person name="Leongamornlert D.A."/>
            <person name="Lloyd D.M."/>
            <person name="Lloyd C."/>
            <person name="Loveland J.E."/>
            <person name="Lovell J."/>
            <person name="Martin S."/>
            <person name="Mashreghi-Mohammadi M."/>
            <person name="McLaren S.J."/>
            <person name="McMurray A."/>
            <person name="Milne S."/>
            <person name="Moore M.J.F."/>
            <person name="Nickerson T."/>
            <person name="Palmer S.A."/>
            <person name="Pearce A.V."/>
            <person name="Peck A.I."/>
            <person name="Pelan S."/>
            <person name="Phillimore B."/>
            <person name="Porter K.M."/>
            <person name="Rice C.M."/>
            <person name="Searle S."/>
            <person name="Sehra H.K."/>
            <person name="Shownkeen R."/>
            <person name="Skuce C.D."/>
            <person name="Smith M."/>
            <person name="Steward C.A."/>
            <person name="Sycamore N."/>
            <person name="Tester J."/>
            <person name="Thomas D.W."/>
            <person name="Tracey A."/>
            <person name="Tromans A."/>
            <person name="Tubby B."/>
            <person name="Wall M."/>
            <person name="Wallis J.M."/>
            <person name="West A.P."/>
            <person name="Whitehead S.L."/>
            <person name="Willey D.L."/>
            <person name="Wilming L."/>
            <person name="Wray P.W."/>
            <person name="Wright M.W."/>
            <person name="Young L."/>
            <person name="Coulson A."/>
            <person name="Durbin R.M."/>
            <person name="Hubbard T."/>
            <person name="Sulston J.E."/>
            <person name="Beck S."/>
            <person name="Bentley D.R."/>
            <person name="Rogers J."/>
            <person name="Ross M.T."/>
        </authorList>
    </citation>
    <scope>NUCLEOTIDE SEQUENCE [LARGE SCALE GENOMIC DNA]</scope>
</reference>
<reference key="6">
    <citation type="journal article" date="2004" name="Genome Res.">
        <title>The status, quality, and expansion of the NIH full-length cDNA project: the Mammalian Gene Collection (MGC).</title>
        <authorList>
            <consortium name="The MGC Project Team"/>
        </authorList>
    </citation>
    <scope>NUCLEOTIDE SEQUENCE [LARGE SCALE MRNA] (ISOFORM 1)</scope>
    <source>
        <tissue>Kidney</tissue>
    </source>
</reference>
<reference key="7">
    <citation type="submission" date="1996-03" db="EMBL/GenBank/DDBJ databases">
        <title>Characterization of different mRNA types expressed in human brain.</title>
        <authorList>
            <person name="Dmitrenko V.V."/>
            <person name="Garifulin O.M."/>
            <person name="Kavsan V.M."/>
        </authorList>
    </citation>
    <scope>NUCLEOTIDE SEQUENCE [MRNA] OF 1-80 (ISOFORM 1)</scope>
    <source>
        <tissue>Brain</tissue>
    </source>
</reference>
<reference key="8">
    <citation type="journal article" date="2010" name="J. Biol. Chem.">
        <title>A novel type of E3 ligase for the Ufm1 conjugation system.</title>
        <authorList>
            <person name="Tatsumi K."/>
            <person name="Sou Y.S."/>
            <person name="Tada N."/>
            <person name="Nakamura E."/>
            <person name="Iemura S."/>
            <person name="Natsume T."/>
            <person name="Kang S.H."/>
            <person name="Chung C.H."/>
            <person name="Kasahara M."/>
            <person name="Kominami E."/>
            <person name="Yamamoto M."/>
            <person name="Tanaka K."/>
            <person name="Komatsu M."/>
        </authorList>
    </citation>
    <scope>FUNCTION</scope>
</reference>
<reference key="9">
    <citation type="journal article" date="2011" name="BMC Syst. Biol.">
        <title>Initial characterization of the human central proteome.</title>
        <authorList>
            <person name="Burkard T.R."/>
            <person name="Planyavsky M."/>
            <person name="Kaupe I."/>
            <person name="Breitwieser F.P."/>
            <person name="Buerckstuemmer T."/>
            <person name="Bennett K.L."/>
            <person name="Superti-Furga G."/>
            <person name="Colinge J."/>
        </authorList>
    </citation>
    <scope>IDENTIFICATION BY MASS SPECTROMETRY [LARGE SCALE ANALYSIS]</scope>
</reference>
<reference key="10">
    <citation type="journal article" date="2012" name="PLoS ONE">
        <title>Transcriptional regulation of the Ufm1 conjugation system in response to disturbance of the endoplasmic reticulum homeostasis and inhibition of vesicle trafficking.</title>
        <authorList>
            <person name="Zhang Y."/>
            <person name="Zhang M."/>
            <person name="Wu J."/>
            <person name="Lei G."/>
            <person name="Li H."/>
        </authorList>
    </citation>
    <scope>INDUCTION</scope>
</reference>
<reference key="11">
    <citation type="journal article" date="2014" name="Mol. Cell">
        <title>Modification of ASC1 by UFM1 is crucial for ERalpha transactivation and breast cancer development.</title>
        <authorList>
            <person name="Yoo H.M."/>
            <person name="Kang S.H."/>
            <person name="Kim J.Y."/>
            <person name="Lee J.E."/>
            <person name="Seong M.W."/>
            <person name="Lee S.W."/>
            <person name="Ka S.H."/>
            <person name="Sou Y.S."/>
            <person name="Komatsu M."/>
            <person name="Tanaka K."/>
            <person name="Lee S.T."/>
            <person name="Noh D.Y."/>
            <person name="Baek S.H."/>
            <person name="Jeon Y.J."/>
            <person name="Chung C.H."/>
        </authorList>
    </citation>
    <scope>FUNCTION</scope>
    <scope>UFMYLATION AT LYS-69</scope>
</reference>
<reference key="12">
    <citation type="journal article" date="2016" name="PLoS ONE">
        <title>UBA5 mutations cause a new form of autosomal recessive cerebellar ataxia.</title>
        <authorList>
            <person name="Duan R."/>
            <person name="Shi Y."/>
            <person name="Yu L."/>
            <person name="Zhang G."/>
            <person name="Li J."/>
            <person name="Lin Y."/>
            <person name="Guo J."/>
            <person name="Wang J."/>
            <person name="Shen L."/>
            <person name="Jiang H."/>
            <person name="Wang G."/>
            <person name="Tang B."/>
        </authorList>
    </citation>
    <scope>INTERACTION WITH UBA5</scope>
</reference>
<reference key="13">
    <citation type="journal article" date="2017" name="Neurology">
        <title>founder mutation in the Roma population causes recessive variant of H-ABC.</title>
        <authorList>
            <consortium name="Recessive H-ABC Research Group"/>
            <person name="Hamilton E.M.C."/>
            <person name="Bertini E."/>
            <person name="Kalaydjieva L."/>
            <person name="Morar B."/>
            <person name="Dojcakova D."/>
            <person name="Liu J."/>
            <person name="Vanderver A."/>
            <person name="Curiel J."/>
            <person name="Persoon C.M."/>
            <person name="Diodato D."/>
            <person name="Pinelli L."/>
            <person name="van der Meij N.L."/>
            <person name="Plecko B."/>
            <person name="Blaser S."/>
            <person name="Wolf N.I."/>
            <person name="Waisfisz Q."/>
            <person name="Abbink T.E.M."/>
            <person name="van der Knaap M.S."/>
        </authorList>
    </citation>
    <scope>INVOLVEMENT IN HLD14</scope>
</reference>
<reference key="14">
    <citation type="journal article" date="2018" name="Brain">
        <title>Biallelic UFM1 and UFC1 mutations expand the essential role of ufmylation in brain development.</title>
        <authorList>
            <person name="Nahorski M.S."/>
            <person name="Maddirevula S."/>
            <person name="Ishimura R."/>
            <person name="Alsahli S."/>
            <person name="Brady A.F."/>
            <person name="Begemann A."/>
            <person name="Mizushima T."/>
            <person name="Guzman-Vega F.J."/>
            <person name="Obata M."/>
            <person name="Ichimura Y."/>
            <person name="Alsaif H.S."/>
            <person name="Anazi S."/>
            <person name="Ibrahim N."/>
            <person name="Abdulwahab F."/>
            <person name="Hashem M."/>
            <person name="Monies D."/>
            <person name="Abouelhoda M."/>
            <person name="Meyer B.F."/>
            <person name="Alfadhel M."/>
            <person name="Eyaid W."/>
            <person name="Zweier M."/>
            <person name="Steindl K."/>
            <person name="Rauch A."/>
            <person name="Arold S.T."/>
            <person name="Woods C.G."/>
            <person name="Komatsu M."/>
            <person name="Alkuraya F.S."/>
        </authorList>
    </citation>
    <scope>FUNCTION</scope>
    <scope>INTERACTION WITH UFC1</scope>
    <scope>INVOLVEMENT IN HLD14</scope>
    <scope>VARIANT HLD14 CYS-81</scope>
    <scope>CHARACTERIZATION OF VARIANT HLD14 CYS-81</scope>
</reference>
<reference key="15">
    <citation type="journal article" date="2018" name="FASEB J.">
        <title>Trans-binding of UFM1 to UBA5 stimulates UBA5 homodimerization and ATP binding.</title>
        <authorList>
            <person name="Mashahreh B."/>
            <person name="Hassouna F."/>
            <person name="Soudah N."/>
            <person name="Cohen-Kfir E."/>
            <person name="Strulovich R."/>
            <person name="Haitin Y."/>
            <person name="Wiener R."/>
        </authorList>
    </citation>
    <scope>INTERACTION WITH UBA5</scope>
</reference>
<reference key="16">
    <citation type="journal article" date="2019" name="Proc. Natl. Acad. Sci. U.S.A.">
        <title>Ribosomal protein RPL26 is the principal target of UFMylation.</title>
        <authorList>
            <person name="Walczak C.P."/>
            <person name="Leto D.E."/>
            <person name="Zhang L."/>
            <person name="Riepe C."/>
            <person name="Muller R.Y."/>
            <person name="DaRosa P.A."/>
            <person name="Ingolia N.T."/>
            <person name="Elias J.E."/>
            <person name="Kopito R.R."/>
        </authorList>
    </citation>
    <scope>FUNCTION</scope>
</reference>
<reference key="17">
    <citation type="journal article" date="2020" name="Cell">
        <title>A genome-wide ER-phagy screen highlights key roles of mitochondrial metabolism and ER-Resident UFMylation.</title>
        <authorList>
            <person name="Liang J.R."/>
            <person name="Lingeman E."/>
            <person name="Luong T."/>
            <person name="Ahmed S."/>
            <person name="Muhar M."/>
            <person name="Nguyen T."/>
            <person name="Olzmann J.A."/>
            <person name="Corn J.E."/>
        </authorList>
    </citation>
    <scope>FUNCTION</scope>
</reference>
<reference key="18">
    <citation type="journal article" date="2022" name="Cell Rep.">
        <title>Human UFSP1 is an active protease that regulates UFM1 maturation and UFMylation.</title>
        <authorList>
            <person name="Millrine D."/>
            <person name="Cummings T."/>
            <person name="Matthews S.P."/>
            <person name="Peter J.J."/>
            <person name="Magnussen H.M."/>
            <person name="Lange S.M."/>
            <person name="Macartney T."/>
            <person name="Lamoliatte F."/>
            <person name="Knebel A."/>
            <person name="Kulathu Y."/>
        </authorList>
    </citation>
    <scope>PROTEOLYTIC CLEAVAGE</scope>
</reference>
<reference key="19">
    <citation type="journal article" date="2022" name="J. Biol. Chem.">
        <title>Human UFSP1 translated from an upstream near-cognate initiation codon functions as an active UFM1-specific protease.</title>
        <authorList>
            <person name="Liang Q."/>
            <person name="Jin Y."/>
            <person name="Xu S."/>
            <person name="Zhou J."/>
            <person name="Mao J."/>
            <person name="Ma X."/>
            <person name="Wang M."/>
            <person name="Cong Y.S."/>
        </authorList>
    </citation>
    <scope>PROTEOLYTIC CLEAVAGE</scope>
</reference>
<reference key="20">
    <citation type="journal article" date="2024" name="Mol. Cell">
        <title>UFL1 ablation in T cells suppresses PD-1 UFMylation to enhance anti-tumor immunity.</title>
        <authorList>
            <person name="He C."/>
            <person name="Xing X."/>
            <person name="Chen H.Y."/>
            <person name="Gao M."/>
            <person name="Shi J."/>
            <person name="Xiang B."/>
            <person name="Xiao X."/>
            <person name="Sun Y."/>
            <person name="Yu H."/>
            <person name="Xu G."/>
            <person name="Yao Y."/>
            <person name="Xie Z."/>
            <person name="Xing Y."/>
            <person name="Budiarto B.R."/>
            <person name="Chen S.Y."/>
            <person name="Gao Y."/>
            <person name="Lee Y.R."/>
            <person name="Zhang J."/>
        </authorList>
    </citation>
    <scope>FUNCTION</scope>
    <scope>MUTAGENESIS OF 83-GLY--CYS-85</scope>
</reference>
<reference evidence="24" key="21">
    <citation type="journal article" date="2006" name="Biochem. Biophys. Res. Commun.">
        <title>Solution structure and dynamics of Ufm1, a ubiquitin-fold modifier 1.</title>
        <authorList>
            <person name="Sasakawa H."/>
            <person name="Sakata E."/>
            <person name="Yamaguchi Y."/>
            <person name="Komatsu M."/>
            <person name="Tatsumi K."/>
            <person name="Kominami E."/>
            <person name="Tanaka K."/>
            <person name="Kato K."/>
        </authorList>
    </citation>
    <scope>STRUCTURE BY NMR</scope>
</reference>
<reference evidence="28 29" key="22">
    <citation type="journal article" date="2016" name="Cell Rep.">
        <title>Trans-binding mechanism of ubiquitin-like protein activation revealed by a UBA5-UFM1 Complex.</title>
        <authorList>
            <person name="Oweis W."/>
            <person name="Padala P."/>
            <person name="Hassouna F."/>
            <person name="Cohen-Kfir E."/>
            <person name="Gibbs D.R."/>
            <person name="Todd E.A."/>
            <person name="Berndsen C.E."/>
            <person name="Wiener R."/>
        </authorList>
    </citation>
    <scope>X-RAY CRYSTALLOGRAPHY (1.85 ANGSTROMS) OF 1-83 IN COMPLEX WITH UBA5</scope>
    <scope>FUNCTION</scope>
    <scope>INTERACTION WITH UBA5</scope>
    <scope>MUTAGENESIS OF ALA-48 AND ARG-79</scope>
</reference>
<reference evidence="25" key="23">
    <citation type="journal article" date="2016" name="J. Biol. Chem.">
        <title>Structural and functional analysis of a novel interaction motif within UFM1-activating enzyme 5 (UBA5) required for binding to ubiquitin-like proteins and ufmylation.</title>
        <authorList>
            <person name="Habisov S."/>
            <person name="Huber J."/>
            <person name="Ichimura Y."/>
            <person name="Akutsu M."/>
            <person name="Rogova N."/>
            <person name="Loehr F."/>
            <person name="McEwan D.G."/>
            <person name="Johansen T."/>
            <person name="Dikic I."/>
            <person name="Doetsch V."/>
            <person name="Komatsu M."/>
            <person name="Rogov V.V."/>
            <person name="Kirkin V."/>
        </authorList>
    </citation>
    <scope>X-RAY CRYSTALLOGRAPHY (2.55 ANGSTROMS) OF 2-83 IN COMPLEX WITH UBA5</scope>
    <scope>INTERACTION WITH UBA5</scope>
</reference>
<reference evidence="26 27" key="24">
    <citation type="journal article" date="2017" name="Sci. Rep.">
        <title>Novel insights into the interaction of UBA5 with UFM1 via a UFM1-interacting sequence.</title>
        <authorList>
            <person name="Padala P."/>
            <person name="Oweis W."/>
            <person name="Mashahreh B."/>
            <person name="Soudah N."/>
            <person name="Cohen-Kfir E."/>
            <person name="Todd E.A."/>
            <person name="Berndsen C.E."/>
            <person name="Wiener R."/>
        </authorList>
    </citation>
    <scope>X-RAY CRYSTALLOGRAPHY (2.00 ANGSTROMS) OF 1-83 IN COMPLEX WITH UBA5</scope>
    <scope>INTERACTION WITH UBA5</scope>
    <scope>MUTAGENESIS OF LEU-21 AND GLU-38</scope>
</reference>
<reference evidence="30" key="25">
    <citation type="journal article" date="2019" name="J. Mol. Biol.">
        <title>An N-terminal extension to UBA5 adenylation domain boosts UFM1 activation: isoform-specific differences in ubiquitin-like protein activation.</title>
        <authorList>
            <person name="Soudah N."/>
            <person name="Padala P."/>
            <person name="Hassouna F."/>
            <person name="Kumar M."/>
            <person name="Mashahreh B."/>
            <person name="Lebedev A.A."/>
            <person name="Isupov M.N."/>
            <person name="Cohen-Kfir E."/>
            <person name="Wiener R."/>
        </authorList>
    </citation>
    <scope>X-RAY CRYSTALLOGRAPHY (2.10 ANGSTROMS) OF 1-78 IN COMPLEX WITH UBA5</scope>
    <scope>INTERACTION WITH UBA5</scope>
</reference>
<reference evidence="31 32" key="26">
    <citation type="journal article" date="2024" name="Nature">
        <title>UFM1 E3 ligase promotes recycling of 60S ribosomal subunits from the ER.</title>
        <authorList>
            <person name="DaRosa P.A."/>
            <person name="Penchev I."/>
            <person name="Gumbin S.C."/>
            <person name="Scavone F."/>
            <person name="Wachalska M."/>
            <person name="Paulo J.A."/>
            <person name="Ordureau A."/>
            <person name="Peter J.J."/>
            <person name="Kulathu Y."/>
            <person name="Harper J.W."/>
            <person name="Becker T."/>
            <person name="Beckmann R."/>
            <person name="Kopito R.R."/>
        </authorList>
    </citation>
    <scope>STRUCTURE BY ELECTRON MICROSCOPY (2.9 ANGSTROMS) OF THE UREL COMPLEX IN COMPLEX WITH THE 60S RIBOSOME</scope>
    <scope>X-RAY CRYSTALLOGRAPHY (1.78 ANGSTROMS) OF 1-83 IN COMPLEX WITH UFC1</scope>
    <scope>FUNCTION</scope>
</reference>
<dbReference type="EMBL" id="AB154404">
    <property type="protein sequence ID" value="BAD15373.1"/>
    <property type="molecule type" value="mRNA"/>
</dbReference>
<dbReference type="EMBL" id="AF208844">
    <property type="protein sequence ID" value="AAF64258.1"/>
    <property type="molecule type" value="mRNA"/>
</dbReference>
<dbReference type="EMBL" id="CR457189">
    <property type="protein sequence ID" value="CAG33470.1"/>
    <property type="molecule type" value="mRNA"/>
</dbReference>
<dbReference type="EMBL" id="DA664581">
    <property type="status" value="NOT_ANNOTATED_CDS"/>
    <property type="molecule type" value="mRNA"/>
</dbReference>
<dbReference type="EMBL" id="AL356863">
    <property type="status" value="NOT_ANNOTATED_CDS"/>
    <property type="molecule type" value="Genomic_DNA"/>
</dbReference>
<dbReference type="EMBL" id="BC005193">
    <property type="protein sequence ID" value="AAH05193.1"/>
    <property type="molecule type" value="mRNA"/>
</dbReference>
<dbReference type="EMBL" id="Z70222">
    <property type="protein sequence ID" value="CAA94181.1"/>
    <property type="molecule type" value="mRNA"/>
</dbReference>
<dbReference type="CCDS" id="CCDS66533.1">
    <molecule id="P61960-2"/>
</dbReference>
<dbReference type="CCDS" id="CCDS9366.1">
    <molecule id="P61960-1"/>
</dbReference>
<dbReference type="RefSeq" id="NP_001273632.1">
    <property type="nucleotide sequence ID" value="NM_001286703.1"/>
</dbReference>
<dbReference type="RefSeq" id="NP_001273633.1">
    <molecule id="P61960-2"/>
    <property type="nucleotide sequence ID" value="NM_001286704.2"/>
</dbReference>
<dbReference type="RefSeq" id="NP_001273634.1">
    <property type="nucleotide sequence ID" value="NM_001286705.1"/>
</dbReference>
<dbReference type="RefSeq" id="NP_001273635.1">
    <property type="nucleotide sequence ID" value="NM_001286706.1"/>
</dbReference>
<dbReference type="RefSeq" id="NP_057701.1">
    <molecule id="P61960-1"/>
    <property type="nucleotide sequence ID" value="NM_016617.4"/>
</dbReference>
<dbReference type="PDB" id="1WXS">
    <property type="method" value="NMR"/>
    <property type="chains" value="A=1-85"/>
</dbReference>
<dbReference type="PDB" id="5HKH">
    <property type="method" value="X-ray"/>
    <property type="resolution" value="2.55 A"/>
    <property type="chains" value="A/C=2-83"/>
</dbReference>
<dbReference type="PDB" id="5IA7">
    <property type="method" value="X-ray"/>
    <property type="resolution" value="2.00 A"/>
    <property type="chains" value="A/B=1-83"/>
</dbReference>
<dbReference type="PDB" id="5IA8">
    <property type="method" value="X-ray"/>
    <property type="resolution" value="2.00 A"/>
    <property type="chains" value="A/B=2-83"/>
</dbReference>
<dbReference type="PDB" id="5IAA">
    <property type="method" value="X-ray"/>
    <property type="resolution" value="1.85 A"/>
    <property type="chains" value="C/D=1-83"/>
</dbReference>
<dbReference type="PDB" id="5L95">
    <property type="method" value="X-ray"/>
    <property type="resolution" value="2.10 A"/>
    <property type="chains" value="C/D=4-83"/>
</dbReference>
<dbReference type="PDB" id="6H77">
    <property type="method" value="X-ray"/>
    <property type="resolution" value="2.10 A"/>
    <property type="chains" value="Q/R/S/T=1-78"/>
</dbReference>
<dbReference type="PDB" id="7W3N">
    <property type="method" value="X-ray"/>
    <property type="resolution" value="1.60 A"/>
    <property type="chains" value="A=1-83"/>
</dbReference>
<dbReference type="PDB" id="8BZR">
    <property type="method" value="X-ray"/>
    <property type="resolution" value="1.78 A"/>
    <property type="chains" value="B=1-83"/>
</dbReference>
<dbReference type="PDB" id="8OHD">
    <property type="method" value="EM"/>
    <property type="resolution" value="3.10 A"/>
    <property type="chains" value="D=1-85"/>
</dbReference>
<dbReference type="PDB" id="8OJ0">
    <property type="method" value="EM"/>
    <property type="resolution" value="3.30 A"/>
    <property type="chains" value="D=1-85"/>
</dbReference>
<dbReference type="PDB" id="8OJ5">
    <property type="method" value="EM"/>
    <property type="resolution" value="2.90 A"/>
    <property type="chains" value="D=1-85"/>
</dbReference>
<dbReference type="PDB" id="8QFC">
    <property type="method" value="EM"/>
    <property type="resolution" value="3.20 A"/>
    <property type="chains" value="E=1-83"/>
</dbReference>
<dbReference type="PDBsum" id="1WXS"/>
<dbReference type="PDBsum" id="5HKH"/>
<dbReference type="PDBsum" id="5IA7"/>
<dbReference type="PDBsum" id="5IA8"/>
<dbReference type="PDBsum" id="5IAA"/>
<dbReference type="PDBsum" id="5L95"/>
<dbReference type="PDBsum" id="6H77"/>
<dbReference type="PDBsum" id="7W3N"/>
<dbReference type="PDBsum" id="8BZR"/>
<dbReference type="PDBsum" id="8OHD"/>
<dbReference type="PDBsum" id="8OJ0"/>
<dbReference type="PDBsum" id="8OJ5"/>
<dbReference type="PDBsum" id="8QFC"/>
<dbReference type="EMDB" id="EMD-16880"/>
<dbReference type="EMDB" id="EMD-16902"/>
<dbReference type="EMDB" id="EMD-16905"/>
<dbReference type="SASBDB" id="P61960"/>
<dbReference type="SMR" id="P61960"/>
<dbReference type="BioGRID" id="119616">
    <property type="interactions" value="113"/>
</dbReference>
<dbReference type="FunCoup" id="P61960">
    <property type="interactions" value="3132"/>
</dbReference>
<dbReference type="IntAct" id="P61960">
    <property type="interactions" value="30"/>
</dbReference>
<dbReference type="MINT" id="P61960"/>
<dbReference type="STRING" id="9606.ENSP00000368970"/>
<dbReference type="GlyGen" id="P61960">
    <property type="glycosylation" value="1 site, 1 O-linked glycan (1 site)"/>
</dbReference>
<dbReference type="iPTMnet" id="P61960"/>
<dbReference type="PhosphoSitePlus" id="P61960"/>
<dbReference type="BioMuta" id="UFM1"/>
<dbReference type="DMDM" id="48428799"/>
<dbReference type="jPOST" id="P61960"/>
<dbReference type="MassIVE" id="P61960"/>
<dbReference type="PaxDb" id="9606-ENSP00000368970"/>
<dbReference type="PeptideAtlas" id="P61960"/>
<dbReference type="ProteomicsDB" id="57344">
    <molecule id="P61960-1"/>
</dbReference>
<dbReference type="ProteomicsDB" id="57345">
    <molecule id="P61960-2"/>
</dbReference>
<dbReference type="Pumba" id="P61960"/>
<dbReference type="TopDownProteomics" id="P61960-1">
    <molecule id="P61960-1"/>
</dbReference>
<dbReference type="TopDownProteomics" id="P61960-2">
    <molecule id="P61960-2"/>
</dbReference>
<dbReference type="Antibodypedia" id="42138">
    <property type="antibodies" value="74 antibodies from 23 providers"/>
</dbReference>
<dbReference type="DNASU" id="51569"/>
<dbReference type="Ensembl" id="ENST00000239878.9">
    <molecule id="P61960-1"/>
    <property type="protein sequence ID" value="ENSP00000239878.4"/>
    <property type="gene ID" value="ENSG00000120686.12"/>
</dbReference>
<dbReference type="Ensembl" id="ENST00000379649.5">
    <molecule id="P61960-2"/>
    <property type="protein sequence ID" value="ENSP00000368970.1"/>
    <property type="gene ID" value="ENSG00000120686.12"/>
</dbReference>
<dbReference type="GeneID" id="51569"/>
<dbReference type="KEGG" id="hsa:51569"/>
<dbReference type="MANE-Select" id="ENST00000239878.9">
    <property type="protein sequence ID" value="ENSP00000239878.4"/>
    <property type="RefSeq nucleotide sequence ID" value="NM_016617.4"/>
    <property type="RefSeq protein sequence ID" value="NP_057701.1"/>
</dbReference>
<dbReference type="UCSC" id="uc001uwu.5">
    <molecule id="P61960-1"/>
    <property type="organism name" value="human"/>
</dbReference>
<dbReference type="AGR" id="HGNC:20597"/>
<dbReference type="CTD" id="51569"/>
<dbReference type="DisGeNET" id="51569"/>
<dbReference type="GeneCards" id="UFM1"/>
<dbReference type="HGNC" id="HGNC:20597">
    <property type="gene designation" value="UFM1"/>
</dbReference>
<dbReference type="HPA" id="ENSG00000120686">
    <property type="expression patterns" value="Low tissue specificity"/>
</dbReference>
<dbReference type="MalaCards" id="UFM1"/>
<dbReference type="MIM" id="610553">
    <property type="type" value="gene"/>
</dbReference>
<dbReference type="MIM" id="617899">
    <property type="type" value="phenotype"/>
</dbReference>
<dbReference type="neXtProt" id="NX_P61960"/>
<dbReference type="OpenTargets" id="ENSG00000120686"/>
<dbReference type="Orphanet" id="139441">
    <property type="disease" value="Hypomyelination with atrophy of basal ganglia and cerebellum"/>
</dbReference>
<dbReference type="PharmGKB" id="PA134863405"/>
<dbReference type="VEuPathDB" id="HostDB:ENSG00000120686"/>
<dbReference type="eggNOG" id="KOG3483">
    <property type="taxonomic scope" value="Eukaryota"/>
</dbReference>
<dbReference type="GeneTree" id="ENSGT00390000010391"/>
<dbReference type="HOGENOM" id="CLU_175114_2_0_1"/>
<dbReference type="InParanoid" id="P61960"/>
<dbReference type="OMA" id="MEHAVGK"/>
<dbReference type="OrthoDB" id="284357at2759"/>
<dbReference type="PAN-GO" id="P61960">
    <property type="GO annotations" value="3 GO annotations based on evolutionary models"/>
</dbReference>
<dbReference type="PhylomeDB" id="P61960"/>
<dbReference type="TreeFam" id="TF312934"/>
<dbReference type="PathwayCommons" id="P61960"/>
<dbReference type="SignaLink" id="P61960"/>
<dbReference type="BioGRID-ORCS" id="51569">
    <property type="hits" value="417 hits in 1167 CRISPR screens"/>
</dbReference>
<dbReference type="ChiTaRS" id="UFM1">
    <property type="organism name" value="human"/>
</dbReference>
<dbReference type="EvolutionaryTrace" id="P61960"/>
<dbReference type="GeneWiki" id="UFM1"/>
<dbReference type="GenomeRNAi" id="51569"/>
<dbReference type="Pharos" id="P61960">
    <property type="development level" value="Tbio"/>
</dbReference>
<dbReference type="PRO" id="PR:P61960"/>
<dbReference type="Proteomes" id="UP000005640">
    <property type="component" value="Chromosome 13"/>
</dbReference>
<dbReference type="RNAct" id="P61960">
    <property type="molecule type" value="protein"/>
</dbReference>
<dbReference type="Bgee" id="ENSG00000120686">
    <property type="expression patterns" value="Expressed in corpus epididymis and 210 other cell types or tissues"/>
</dbReference>
<dbReference type="ExpressionAtlas" id="P61960">
    <property type="expression patterns" value="baseline and differential"/>
</dbReference>
<dbReference type="GO" id="GO:0005737">
    <property type="term" value="C:cytoplasm"/>
    <property type="evidence" value="ECO:0000314"/>
    <property type="project" value="UniProtKB"/>
</dbReference>
<dbReference type="GO" id="GO:0005783">
    <property type="term" value="C:endoplasmic reticulum"/>
    <property type="evidence" value="ECO:0000250"/>
    <property type="project" value="ParkinsonsUK-UCL"/>
</dbReference>
<dbReference type="GO" id="GO:0005634">
    <property type="term" value="C:nucleus"/>
    <property type="evidence" value="ECO:0000314"/>
    <property type="project" value="UniProtKB"/>
</dbReference>
<dbReference type="GO" id="GO:0007420">
    <property type="term" value="P:brain development"/>
    <property type="evidence" value="ECO:0000315"/>
    <property type="project" value="UniProtKB"/>
</dbReference>
<dbReference type="GO" id="GO:0043066">
    <property type="term" value="P:negative regulation of apoptotic process"/>
    <property type="evidence" value="ECO:0000250"/>
    <property type="project" value="ParkinsonsUK-UCL"/>
</dbReference>
<dbReference type="GO" id="GO:0042308">
    <property type="term" value="P:negative regulation of protein import into nucleus"/>
    <property type="evidence" value="ECO:0000315"/>
    <property type="project" value="CACAO"/>
</dbReference>
<dbReference type="GO" id="GO:1990592">
    <property type="term" value="P:protein K69-linked ufmylation"/>
    <property type="evidence" value="ECO:0000314"/>
    <property type="project" value="UniProtKB"/>
</dbReference>
<dbReference type="GO" id="GO:0071569">
    <property type="term" value="P:protein ufmylation"/>
    <property type="evidence" value="ECO:0000314"/>
    <property type="project" value="UniProtKB"/>
</dbReference>
<dbReference type="GO" id="GO:0033146">
    <property type="term" value="P:regulation of intracellular estrogen receptor signaling pathway"/>
    <property type="evidence" value="ECO:0000314"/>
    <property type="project" value="UniProtKB"/>
</dbReference>
<dbReference type="GO" id="GO:0034976">
    <property type="term" value="P:response to endoplasmic reticulum stress"/>
    <property type="evidence" value="ECO:0000314"/>
    <property type="project" value="MGI"/>
</dbReference>
<dbReference type="GO" id="GO:0061709">
    <property type="term" value="P:reticulophagy"/>
    <property type="evidence" value="ECO:0000315"/>
    <property type="project" value="UniProtKB"/>
</dbReference>
<dbReference type="CDD" id="cd01766">
    <property type="entry name" value="Ubl_UFM1"/>
    <property type="match status" value="1"/>
</dbReference>
<dbReference type="FunFam" id="3.10.20.90:FF:000044">
    <property type="entry name" value="Ubiquitin-fold modifier 1"/>
    <property type="match status" value="1"/>
</dbReference>
<dbReference type="Gene3D" id="3.10.20.90">
    <property type="entry name" value="Phosphatidylinositol 3-kinase Catalytic Subunit, Chain A, domain 1"/>
    <property type="match status" value="1"/>
</dbReference>
<dbReference type="InterPro" id="IPR029071">
    <property type="entry name" value="Ubiquitin-like_domsf"/>
</dbReference>
<dbReference type="InterPro" id="IPR005375">
    <property type="entry name" value="UFM1"/>
</dbReference>
<dbReference type="PANTHER" id="PTHR15825">
    <property type="entry name" value="UBIQUITIN-FOLD MODIFIER 1"/>
    <property type="match status" value="1"/>
</dbReference>
<dbReference type="PANTHER" id="PTHR15825:SF5">
    <property type="entry name" value="UBIQUITIN-FOLD MODIFIER 1"/>
    <property type="match status" value="1"/>
</dbReference>
<dbReference type="Pfam" id="PF03671">
    <property type="entry name" value="Ufm1"/>
    <property type="match status" value="1"/>
</dbReference>
<dbReference type="PIRSF" id="PIRSF038027">
    <property type="entry name" value="Ubiquitin-like_Ufm1"/>
    <property type="match status" value="1"/>
</dbReference>
<dbReference type="SUPFAM" id="SSF54236">
    <property type="entry name" value="Ubiquitin-like"/>
    <property type="match status" value="1"/>
</dbReference>
<keyword id="KW-0002">3D-structure</keyword>
<keyword id="KW-0025">Alternative splicing</keyword>
<keyword id="KW-0963">Cytoplasm</keyword>
<keyword id="KW-0225">Disease variant</keyword>
<keyword id="KW-1017">Isopeptide bond</keyword>
<keyword id="KW-1026">Leukodystrophy</keyword>
<keyword id="KW-0539">Nucleus</keyword>
<keyword id="KW-1267">Proteomics identification</keyword>
<keyword id="KW-1185">Reference proteome</keyword>
<keyword id="KW-0832">Ubl conjugation</keyword>
<keyword id="KW-0833">Ubl conjugation pathway</keyword>
<comment type="function">
    <text evidence="1 2 4 7 11 13 14 17 18">Ubiquitin-like modifier which can be covalently attached via an isopeptide bond to lysine residues of substrate proteins as a monomer or a lysine-linked polymer (PubMed:15071506, PubMed:20018847, PubMed:27653677, PubMed:29868776, PubMed:30626644, PubMed:38377992, PubMed:38383785). The so-called ufmylation, requires the UFM1-activating E1 enzyme UBA5, the UFM1-conjugating E2 enzyme UFC1, and the UFM1-ligase E3 enzyme UFL1 (PubMed:15071506, PubMed:20018847, PubMed:27653677, PubMed:29868776). Ufmylation is involved in various processes, such as ribosome recycling, response to DNA damage, transcription or reticulophagy (also called ER-phagy) induced in response to endoplasmic reticulum stress (PubMed:25219498, PubMed:32160526, PubMed:38383785).</text>
</comment>
<comment type="subunit">
    <text evidence="5 6 7 8 10 11 12">Interacts with UBA5 (PubMed:26872069, PubMed:26929408, PubMed:27653677, PubMed:28360427, PubMed:29295865, PubMed:30412706). Interacts with UFC1 (PubMed:29868776).</text>
</comment>
<comment type="interaction">
    <interactant intactId="EBI-1045061">
        <id>P61960</id>
    </interactant>
    <interactant intactId="EBI-6509505">
        <id>Q0VD86</id>
        <label>INCA1</label>
    </interactant>
    <organismsDiffer>false</organismsDiffer>
    <experiments>3</experiments>
</comment>
<comment type="interaction">
    <interactant intactId="EBI-1045061">
        <id>P61960</id>
    </interactant>
    <interactant intactId="EBI-11976683">
        <id>Q4G0X4</id>
        <label>KCTD21</label>
    </interactant>
    <organismsDiffer>false</organismsDiffer>
    <experiments>3</experiments>
</comment>
<comment type="interaction">
    <interactant intactId="EBI-1045061">
        <id>P61960</id>
    </interactant>
    <interactant intactId="EBI-352877">
        <id>P06703</id>
        <label>S100A6</label>
    </interactant>
    <organismsDiffer>false</organismsDiffer>
    <experiments>2</experiments>
</comment>
<comment type="interaction">
    <interactant intactId="EBI-1045061">
        <id>P61960</id>
    </interactant>
    <interactant intactId="EBI-747805">
        <id>Q9GZZ9</id>
        <label>UBA5</label>
    </interactant>
    <organismsDiffer>false</organismsDiffer>
    <experiments>7</experiments>
</comment>
<comment type="subcellular location">
    <subcellularLocation>
        <location evidence="1">Nucleus</location>
    </subcellularLocation>
    <subcellularLocation>
        <location evidence="1">Cytoplasm</location>
    </subcellularLocation>
</comment>
<comment type="alternative products">
    <event type="alternative splicing"/>
    <isoform>
        <id>P61960-1</id>
        <name>1</name>
        <sequence type="displayed"/>
    </isoform>
    <isoform>
        <id>P61960-2</id>
        <name>2</name>
        <sequence type="described" ref="VSP_041186"/>
    </isoform>
</comment>
<comment type="induction">
    <text evidence="3">Up-regulated by thapsigargin.</text>
</comment>
<comment type="PTM">
    <text evidence="15 16">UFM1 precursor is cleaved by UFSP1, promoting its maturation: processing of the C-terminal Ser-Cys dipeptide is required to expose its C-terminal conserved Gly residue.</text>
</comment>
<comment type="disease" evidence="9 11">
    <disease id="DI-05211">
        <name>Leukodystrophy, hypomyelinating, 14</name>
        <acronym>HLD14</acronym>
        <description>An autosomal recessive, severe disorder characterized by atrophy of the basal ganglia and cerebellum, hypomyelination, severe developmental delay, typically without intentional movements and language development, and microcephaly. Almost all patients exhibit spasticity, extrapyramidal movement abnormalities, and severe drug-resistant epilepsy. Disease onset is early in infancy, and most patients die in the first years of life.</description>
        <dbReference type="MIM" id="617899"/>
    </disease>
    <text evidence="9">The disease is caused by variants affecting the gene represented in this entry. The disease-causing variant may be a homozygous 3-bp deletion in the promoter region of the UFM1 gene, which segregates with the disorder in affected families. In vitro expression studies in different cell lines showed that the mutation significantly reduces transcriptional activity in certain neuronal cell lines (SY5Y and U373), but not in other cell lines, including HeLa and HOF-F2.</text>
</comment>
<comment type="similarity">
    <text evidence="22">Belongs to the UFM1 family.</text>
</comment>
<evidence type="ECO:0000269" key="1">
    <source>
    </source>
</evidence>
<evidence type="ECO:0000269" key="2">
    <source>
    </source>
</evidence>
<evidence type="ECO:0000269" key="3">
    <source>
    </source>
</evidence>
<evidence type="ECO:0000269" key="4">
    <source>
    </source>
</evidence>
<evidence type="ECO:0000269" key="5">
    <source>
    </source>
</evidence>
<evidence type="ECO:0000269" key="6">
    <source>
    </source>
</evidence>
<evidence type="ECO:0000269" key="7">
    <source>
    </source>
</evidence>
<evidence type="ECO:0000269" key="8">
    <source>
    </source>
</evidence>
<evidence type="ECO:0000269" key="9">
    <source>
    </source>
</evidence>
<evidence type="ECO:0000269" key="10">
    <source>
    </source>
</evidence>
<evidence type="ECO:0000269" key="11">
    <source>
    </source>
</evidence>
<evidence type="ECO:0000269" key="12">
    <source>
    </source>
</evidence>
<evidence type="ECO:0000269" key="13">
    <source>
    </source>
</evidence>
<evidence type="ECO:0000269" key="14">
    <source>
    </source>
</evidence>
<evidence type="ECO:0000269" key="15">
    <source>
    </source>
</evidence>
<evidence type="ECO:0000269" key="16">
    <source>
    </source>
</evidence>
<evidence type="ECO:0000269" key="17">
    <source>
    </source>
</evidence>
<evidence type="ECO:0000269" key="18">
    <source>
    </source>
</evidence>
<evidence type="ECO:0000303" key="19">
    <source>
    </source>
</evidence>
<evidence type="ECO:0000303" key="20">
    <source>
    </source>
</evidence>
<evidence type="ECO:0000303" key="21">
    <source>
    </source>
</evidence>
<evidence type="ECO:0000305" key="22"/>
<evidence type="ECO:0000312" key="23">
    <source>
        <dbReference type="HGNC" id="HGNC:20597"/>
    </source>
</evidence>
<evidence type="ECO:0007744" key="24">
    <source>
        <dbReference type="PDB" id="1WXS"/>
    </source>
</evidence>
<evidence type="ECO:0007744" key="25">
    <source>
        <dbReference type="PDB" id="5HKH"/>
    </source>
</evidence>
<evidence type="ECO:0007744" key="26">
    <source>
        <dbReference type="PDB" id="5IA7"/>
    </source>
</evidence>
<evidence type="ECO:0007744" key="27">
    <source>
        <dbReference type="PDB" id="5IA8"/>
    </source>
</evidence>
<evidence type="ECO:0007744" key="28">
    <source>
        <dbReference type="PDB" id="5IAA"/>
    </source>
</evidence>
<evidence type="ECO:0007744" key="29">
    <source>
        <dbReference type="PDB" id="5L95"/>
    </source>
</evidence>
<evidence type="ECO:0007744" key="30">
    <source>
        <dbReference type="PDB" id="6H77"/>
    </source>
</evidence>
<evidence type="ECO:0007744" key="31">
    <source>
        <dbReference type="PDB" id="8BZR"/>
    </source>
</evidence>
<evidence type="ECO:0007744" key="32">
    <source>
        <dbReference type="PDB" id="8OJ0"/>
    </source>
</evidence>
<evidence type="ECO:0007829" key="33">
    <source>
        <dbReference type="PDB" id="1WXS"/>
    </source>
</evidence>
<evidence type="ECO:0007829" key="34">
    <source>
        <dbReference type="PDB" id="7W3N"/>
    </source>
</evidence>
<name>UFM1_HUMAN</name>
<gene>
    <name evidence="20 23" type="primary">UFM1</name>
    <name evidence="23" type="synonym">C13orf20</name>
    <name evidence="19" type="ORF">BM-002</name>
</gene>
<protein>
    <recommendedName>
        <fullName evidence="20">Ubiquitin-fold modifier 1</fullName>
    </recommendedName>
</protein>
<organism>
    <name type="scientific">Homo sapiens</name>
    <name type="common">Human</name>
    <dbReference type="NCBI Taxonomy" id="9606"/>
    <lineage>
        <taxon>Eukaryota</taxon>
        <taxon>Metazoa</taxon>
        <taxon>Chordata</taxon>
        <taxon>Craniata</taxon>
        <taxon>Vertebrata</taxon>
        <taxon>Euteleostomi</taxon>
        <taxon>Mammalia</taxon>
        <taxon>Eutheria</taxon>
        <taxon>Euarchontoglires</taxon>
        <taxon>Primates</taxon>
        <taxon>Haplorrhini</taxon>
        <taxon>Catarrhini</taxon>
        <taxon>Hominidae</taxon>
        <taxon>Homo</taxon>
    </lineage>
</organism>
<accession>P61960</accession>
<accession>Q14346</accession>
<accession>Q5VXS0</accession>
<accession>Q6IAG6</accession>
<accession>Q9CPX2</accession>
<accession>Q9NZF2</accession>
<feature type="chain" id="PRO_0000042122" description="Ubiquitin-fold modifier 1" evidence="1">
    <location>
        <begin position="1"/>
        <end position="83"/>
    </location>
</feature>
<feature type="propeptide" id="PRO_0000042123" description="Removed in mature form" evidence="1">
    <location>
        <begin position="84"/>
        <end position="85"/>
    </location>
</feature>
<feature type="cross-link" description="Glycyl lysine isopeptide (Lys-Gly) (interchain with G-Cter in UFM1)" evidence="4">
    <location>
        <position position="69"/>
    </location>
</feature>
<feature type="cross-link" description="Glycyl lysine isopeptide (Gly-Lys) (interchain with K-? in acceptor proteins)" evidence="1 4 7">
    <location>
        <position position="83"/>
    </location>
</feature>
<feature type="splice variant" id="VSP_041186" description="In isoform 2." evidence="21">
    <original>MSKVSFKITLTSDPRLPYKV</original>
    <variation>MIRAFPTTTPRSLHLFTSSTFLARALPGAFPTGACEER</variation>
    <location>
        <begin position="1"/>
        <end position="20"/>
    </location>
</feature>
<feature type="sequence variant" id="VAR_081218" description="In HLD14; decreased ability to form thioester bonds with UBA5 and UFC1; decreased protein ufmylation; does not affect the cellular response to endoplasmic reticulum stress; dbSNP:rs1033946108." evidence="11">
    <original>R</original>
    <variation>C</variation>
    <location>
        <position position="81"/>
    </location>
</feature>
<feature type="mutagenesis site" description="Abolished ability to be activated by UBA5." evidence="8">
    <original>L</original>
    <variation>A</variation>
    <location>
        <position position="21"/>
    </location>
</feature>
<feature type="mutagenesis site" description="Abolished ability to be activated by UBA5." evidence="8">
    <original>E</original>
    <variation>A</variation>
    <location>
        <position position="38"/>
    </location>
</feature>
<feature type="mutagenesis site" description="Abolished ability to be activated by UBA5." evidence="7">
    <original>A</original>
    <variation>F</variation>
    <variation>Q</variation>
    <location>
        <position position="48"/>
    </location>
</feature>
<feature type="mutagenesis site" description="Slightly reduced interaction with UBA5." evidence="7">
    <original>R</original>
    <variation>A</variation>
    <location>
        <position position="79"/>
    </location>
</feature>
<feature type="mutagenesis site" description="Abolished activity." evidence="17">
    <location>
        <begin position="83"/>
        <end position="85"/>
    </location>
</feature>
<feature type="mutagenesis site" description="Confers resistance to cleavage." evidence="1">
    <original>G</original>
    <variation>A</variation>
    <location>
        <position position="83"/>
    </location>
</feature>
<feature type="sequence conflict" description="In Ref. 7; CAA94181." evidence="22" ref="7">
    <original>S</original>
    <variation>W</variation>
    <location>
        <position position="12"/>
    </location>
</feature>
<feature type="sequence conflict" description="In Ref. 7; CAA94181." evidence="22" ref="7">
    <original>PRD</original>
    <variation>LEI</variation>
    <location>
        <begin position="78"/>
        <end position="80"/>
    </location>
</feature>
<feature type="strand" evidence="34">
    <location>
        <begin position="2"/>
        <end position="10"/>
    </location>
</feature>
<feature type="strand" evidence="33">
    <location>
        <begin position="14"/>
        <end position="16"/>
    </location>
</feature>
<feature type="strand" evidence="34">
    <location>
        <begin position="18"/>
        <end position="24"/>
    </location>
</feature>
<feature type="strand" evidence="33">
    <location>
        <begin position="25"/>
        <end position="28"/>
    </location>
</feature>
<feature type="helix" evidence="34">
    <location>
        <begin position="29"/>
        <end position="40"/>
    </location>
</feature>
<feature type="helix" evidence="34">
    <location>
        <begin position="44"/>
        <end position="46"/>
    </location>
</feature>
<feature type="strand" evidence="34">
    <location>
        <begin position="47"/>
        <end position="51"/>
    </location>
</feature>
<feature type="strand" evidence="34">
    <location>
        <begin position="59"/>
        <end position="62"/>
    </location>
</feature>
<feature type="helix" evidence="34">
    <location>
        <begin position="63"/>
        <end position="70"/>
    </location>
</feature>
<feature type="strand" evidence="34">
    <location>
        <begin position="72"/>
        <end position="78"/>
    </location>
</feature>